<feature type="chain" id="PRO_0000124637" description="Aldo-keto reductase family 1 member C2">
    <location>
        <begin position="1"/>
        <end position="323"/>
    </location>
</feature>
<feature type="active site" description="Proton donor">
    <location>
        <position position="55"/>
    </location>
</feature>
<feature type="binding site" evidence="3 4 6 7 8">
    <location>
        <begin position="20"/>
        <end position="24"/>
    </location>
    <ligand>
        <name>NADP(+)</name>
        <dbReference type="ChEBI" id="CHEBI:58349"/>
    </ligand>
</feature>
<feature type="binding site" evidence="1">
    <location>
        <position position="24"/>
    </location>
    <ligand>
        <name>substrate</name>
    </ligand>
</feature>
<feature type="binding site" evidence="3 4 6 7 8">
    <location>
        <position position="50"/>
    </location>
    <ligand>
        <name>NADP(+)</name>
        <dbReference type="ChEBI" id="CHEBI:58349"/>
    </ligand>
</feature>
<feature type="binding site">
    <location>
        <position position="117"/>
    </location>
    <ligand>
        <name>substrate</name>
    </ligand>
</feature>
<feature type="binding site" evidence="3 4 6 7 8">
    <location>
        <begin position="166"/>
        <end position="167"/>
    </location>
    <ligand>
        <name>NADP(+)</name>
        <dbReference type="ChEBI" id="CHEBI:58349"/>
    </ligand>
</feature>
<feature type="binding site" evidence="3 4 6 7 8">
    <location>
        <position position="190"/>
    </location>
    <ligand>
        <name>NADP(+)</name>
        <dbReference type="ChEBI" id="CHEBI:58349"/>
    </ligand>
</feature>
<feature type="binding site" evidence="3 4 6 7 8">
    <location>
        <begin position="216"/>
        <end position="222"/>
    </location>
    <ligand>
        <name>NADP(+)</name>
        <dbReference type="ChEBI" id="CHEBI:58349"/>
    </ligand>
</feature>
<feature type="binding site" evidence="1">
    <location>
        <position position="222"/>
    </location>
    <ligand>
        <name>substrate</name>
    </ligand>
</feature>
<feature type="binding site">
    <location>
        <position position="227"/>
    </location>
    <ligand>
        <name>substrate</name>
    </ligand>
</feature>
<feature type="binding site" evidence="3 4 6 7 8">
    <location>
        <begin position="270"/>
        <end position="280"/>
    </location>
    <ligand>
        <name>NADP(+)</name>
        <dbReference type="ChEBI" id="CHEBI:58349"/>
    </ligand>
</feature>
<feature type="site" description="Lowers pKa of active site Tyr" evidence="1">
    <location>
        <position position="84"/>
    </location>
</feature>
<feature type="splice variant" id="VSP_043779" description="In isoform 2." evidence="14">
    <original>PGEEVIPKDENGKILF</original>
    <variation>EDIGILTWKKSPKHNS</variation>
    <location>
        <begin position="124"/>
        <end position="139"/>
    </location>
</feature>
<feature type="splice variant" id="VSP_043780" description="In isoform 2." evidence="14">
    <location>
        <begin position="140"/>
        <end position="323"/>
    </location>
</feature>
<feature type="sequence variant" id="VAR_048216" description="In dbSNP:rs2854482." evidence="11">
    <original>F</original>
    <variation>Y</variation>
    <location>
        <position position="46"/>
    </location>
</feature>
<feature type="sequence variant" id="VAR_066632" description="In SRXY8; partially impaired activity; dbSNP:rs387906750." evidence="10">
    <original>I</original>
    <variation>V</variation>
    <location>
        <position position="79"/>
    </location>
</feature>
<feature type="sequence variant" id="VAR_066633" description="In SRXY8; partially impaired activity; dbSNP:rs797044460." evidence="10">
    <original>H</original>
    <variation>Q</variation>
    <location>
        <position position="90"/>
    </location>
</feature>
<feature type="sequence variant" id="VAR_014748" description="In dbSNP:rs11474.">
    <original>L</original>
    <variation>Q</variation>
    <location>
        <position position="172"/>
    </location>
</feature>
<feature type="sequence variant" id="VAR_066634" description="In SRXY8; partially impaired activity; dbSNP:rs13222." evidence="10">
    <original>H</original>
    <variation>Q</variation>
    <location>
        <position position="222"/>
    </location>
</feature>
<feature type="sequence variant" id="VAR_066635" description="In SRXY8; partially impaired activity; dbSNP:rs387906751." evidence="10">
    <original>N</original>
    <variation>T</variation>
    <location>
        <position position="300"/>
    </location>
</feature>
<feature type="mutagenesis site" description="Strongly decreases affinity for androstenedione. Decreases androstenedione reductase activity about 60-fold." evidence="8">
    <original>Y</original>
    <variation>A</variation>
    <location>
        <position position="24"/>
    </location>
</feature>
<feature type="mutagenesis site" description="Increases the low androstenedione reductase activity." evidence="8">
    <original>K</original>
    <variation>A</variation>
    <variation>M</variation>
    <location>
        <position position="31"/>
    </location>
</feature>
<feature type="mutagenesis site" description="Decreases 3-alpha-hydroxysteroid reductase activity about 50-fold." evidence="6">
    <original>R</original>
    <variation>A</variation>
    <location>
        <position position="301"/>
    </location>
</feature>
<feature type="mutagenesis site" description="Decreases 3-alpha-hydroxysteroid reductase activity about 500-fold." evidence="6">
    <original>R</original>
    <variation>A</variation>
    <location>
        <position position="304"/>
    </location>
</feature>
<feature type="sequence conflict" description="In Ref. 12; AA sequence." evidence="16" ref="12">
    <original>R</original>
    <variation>S</variation>
    <location>
        <position position="76"/>
    </location>
</feature>
<feature type="sequence conflict" description="In Ref. 12; AA sequence." evidence="16" ref="12">
    <original>S</original>
    <variation>C</variation>
    <location>
        <position position="87"/>
    </location>
</feature>
<feature type="sequence conflict" description="In Ref. 12; AA sequence." evidence="16" ref="12">
    <original>E</original>
    <variation>EE</variation>
    <location>
        <position position="93"/>
    </location>
</feature>
<feature type="sequence conflict" description="In Ref. 3; AAB38486." evidence="16" ref="3">
    <original>V</original>
    <variation>A</variation>
    <location>
        <position position="111"/>
    </location>
</feature>
<feature type="sequence conflict" description="In Ref. 7; BAF82993." evidence="16" ref="7">
    <original>G</original>
    <variation>R</variation>
    <location>
        <position position="164"/>
    </location>
</feature>
<feature type="sequence conflict" description="In Ref. 1; AAD14013 and 3; AAB38486." evidence="16" ref="1 3">
    <original>K</original>
    <variation>E</variation>
    <location>
        <position position="179"/>
    </location>
</feature>
<feature type="sequence conflict" description="In Ref. 1; AAD14013 and 3; AAB38486." evidence="16" ref="1 3">
    <original>K</original>
    <variation>E</variation>
    <location>
        <position position="185"/>
    </location>
</feature>
<feature type="sequence conflict" description="In Ref. 12; AA sequence." evidence="16" ref="12">
    <original>C</original>
    <variation>H</variation>
    <location>
        <position position="188"/>
    </location>
</feature>
<feature type="sequence conflict" description="In Ref. 12; AA sequence." evidence="16" ref="12">
    <original>C</original>
    <variation>H</variation>
    <location>
        <position position="193"/>
    </location>
</feature>
<feature type="sequence conflict" description="In Ref. 1; AAD14013 and 3; AAB38486." evidence="16" ref="1 3">
    <original>F</original>
    <variation>I</variation>
    <location>
        <position position="319"/>
    </location>
</feature>
<feature type="strand" evidence="19">
    <location>
        <begin position="7"/>
        <end position="9"/>
    </location>
</feature>
<feature type="strand" evidence="19">
    <location>
        <begin position="15"/>
        <end position="22"/>
    </location>
</feature>
<feature type="helix" evidence="19">
    <location>
        <begin position="32"/>
        <end position="44"/>
    </location>
</feature>
<feature type="strand" evidence="19">
    <location>
        <begin position="48"/>
        <end position="50"/>
    </location>
</feature>
<feature type="helix" evidence="19">
    <location>
        <begin position="53"/>
        <end position="55"/>
    </location>
</feature>
<feature type="helix" evidence="19">
    <location>
        <begin position="58"/>
        <end position="70"/>
    </location>
</feature>
<feature type="helix" evidence="19">
    <location>
        <begin position="76"/>
        <end position="78"/>
    </location>
</feature>
<feature type="strand" evidence="19">
    <location>
        <begin position="80"/>
        <end position="85"/>
    </location>
</feature>
<feature type="helix" evidence="19">
    <location>
        <begin position="87"/>
        <end position="89"/>
    </location>
</feature>
<feature type="helix" evidence="19">
    <location>
        <begin position="92"/>
        <end position="106"/>
    </location>
</feature>
<feature type="strand" evidence="19">
    <location>
        <begin position="111"/>
        <end position="116"/>
    </location>
</feature>
<feature type="strand" evidence="18">
    <location>
        <begin position="119"/>
        <end position="122"/>
    </location>
</feature>
<feature type="strand" evidence="18">
    <location>
        <begin position="124"/>
        <end position="126"/>
    </location>
</feature>
<feature type="helix" evidence="19">
    <location>
        <begin position="144"/>
        <end position="156"/>
    </location>
</feature>
<feature type="strand" evidence="19">
    <location>
        <begin position="159"/>
        <end position="167"/>
    </location>
</feature>
<feature type="helix" evidence="19">
    <location>
        <begin position="170"/>
        <end position="177"/>
    </location>
</feature>
<feature type="strand" evidence="19">
    <location>
        <begin position="187"/>
        <end position="192"/>
    </location>
</feature>
<feature type="helix" evidence="19">
    <location>
        <begin position="200"/>
        <end position="208"/>
    </location>
</feature>
<feature type="strand" evidence="19">
    <location>
        <begin position="212"/>
        <end position="217"/>
    </location>
</feature>
<feature type="turn" evidence="19">
    <location>
        <begin position="225"/>
        <end position="227"/>
    </location>
</feature>
<feature type="helix" evidence="19">
    <location>
        <begin position="235"/>
        <end position="237"/>
    </location>
</feature>
<feature type="helix" evidence="19">
    <location>
        <begin position="239"/>
        <end position="248"/>
    </location>
</feature>
<feature type="helix" evidence="19">
    <location>
        <begin position="252"/>
        <end position="262"/>
    </location>
</feature>
<feature type="strand" evidence="19">
    <location>
        <begin position="266"/>
        <end position="270"/>
    </location>
</feature>
<feature type="helix" evidence="19">
    <location>
        <begin position="274"/>
        <end position="281"/>
    </location>
</feature>
<feature type="helix" evidence="19">
    <location>
        <begin position="282"/>
        <end position="285"/>
    </location>
</feature>
<feature type="helix" evidence="19">
    <location>
        <begin position="290"/>
        <end position="297"/>
    </location>
</feature>
<feature type="helix" evidence="19">
    <location>
        <begin position="309"/>
        <end position="311"/>
    </location>
</feature>
<feature type="strand" evidence="19">
    <location>
        <begin position="319"/>
        <end position="321"/>
    </location>
</feature>
<accession>P52895</accession>
<accession>A8K2N9</accession>
<accession>B4DKR9</accession>
<accession>Q14133</accession>
<accession>Q5SR16</accession>
<accession>Q7M4N1</accession>
<accession>Q96A71</accession>
<organism>
    <name type="scientific">Homo sapiens</name>
    <name type="common">Human</name>
    <dbReference type="NCBI Taxonomy" id="9606"/>
    <lineage>
        <taxon>Eukaryota</taxon>
        <taxon>Metazoa</taxon>
        <taxon>Chordata</taxon>
        <taxon>Craniata</taxon>
        <taxon>Vertebrata</taxon>
        <taxon>Euteleostomi</taxon>
        <taxon>Mammalia</taxon>
        <taxon>Eutheria</taxon>
        <taxon>Euarchontoglires</taxon>
        <taxon>Primates</taxon>
        <taxon>Haplorrhini</taxon>
        <taxon>Catarrhini</taxon>
        <taxon>Hominidae</taxon>
        <taxon>Homo</taxon>
    </lineage>
</organism>
<keyword id="KW-0002">3D-structure</keyword>
<keyword id="KW-0025">Alternative splicing</keyword>
<keyword id="KW-0963">Cytoplasm</keyword>
<keyword id="KW-0903">Direct protein sequencing</keyword>
<keyword id="KW-0225">Disease variant</keyword>
<keyword id="KW-0443">Lipid metabolism</keyword>
<keyword id="KW-0521">NADP</keyword>
<keyword id="KW-0560">Oxidoreductase</keyword>
<keyword id="KW-1267">Proteomics identification</keyword>
<keyword id="KW-1185">Reference proteome</keyword>
<keyword id="KW-0753">Steroid metabolism</keyword>
<protein>
    <recommendedName>
        <fullName evidence="16">Aldo-keto reductase family 1 member C2</fullName>
        <ecNumber evidence="2 5 6 7 8 9 13">1.-.-.-</ecNumber>
        <ecNumber evidence="13">1.1.1.112</ecNumber>
        <ecNumber evidence="2">1.1.1.209</ecNumber>
        <ecNumber evidence="2 5">1.1.1.53</ecNumber>
        <ecNumber evidence="2">1.1.1.62</ecNumber>
        <ecNumber evidence="13">1.3.1.20</ecNumber>
    </recommendedName>
    <alternativeName>
        <fullName>3-alpha-HSD3</fullName>
    </alternativeName>
    <alternativeName>
        <fullName>Chlordecone reductase homolog HAKRD</fullName>
    </alternativeName>
    <alternativeName>
        <fullName evidence="15">Dihydrodiol dehydrogenase 2</fullName>
        <shortName evidence="15">DD-2</shortName>
        <shortName evidence="15">DD2</shortName>
    </alternativeName>
    <alternativeName>
        <fullName>Dihydrodiol dehydrogenase/bile acid-binding protein</fullName>
        <shortName>DD/BABP</shortName>
    </alternativeName>
    <alternativeName>
        <fullName>Type III 3-alpha-hydroxysteroid dehydrogenase</fullName>
        <ecNumber evidence="6 7 8 13">1.1.1.357</ecNumber>
    </alternativeName>
</protein>
<name>AK1C2_HUMAN</name>
<sequence length="323" mass="36735">MDSKYQCVKLNDGHFMPVLGFGTYAPAEVPKSKALEAVKLAIEAGFHHIDSAHVYNNEEQVGLAIRSKIADGSVKREDIFYTSKLWSNSHRPELVRPALERSLKNLQLDYVDLYLIHFPVSVKPGEEVIPKDENGKILFDTVDLCATWEAMEKCKDAGLAKSIGVSNFNHRLLEMILNKPGLKYKPVCNQVECHPYFNQRKLLDFCKSKDIVLVAYSALGSHREEPWVDPNSPVLLEDPVLCALAKKHKRTPALIALRYQLQRGVVVLAKSYNEQRIRQNVQVFEFQLTSEEMKAIDGLNRNVRYLTLDIFAGPPNYPFSDEY</sequence>
<reference key="1">
    <citation type="journal article" date="1993" name="J. Steroid Biochem. Mol. Biol.">
        <title>Molecular cloning of multiple cDNAs encoding human enzymes structurally related to 3 alpha-hydroxysteroid dehydrogenase.</title>
        <authorList>
            <person name="Qin K.-N."/>
            <person name="New M.I."/>
            <person name="Cheng K.-C."/>
        </authorList>
    </citation>
    <scope>NUCLEOTIDE SEQUENCE [MRNA] (ISOFORM 1)</scope>
    <source>
        <tissue>Liver</tissue>
    </source>
</reference>
<reference key="2">
    <citation type="journal article" date="1994" name="Biochim. Biophys. Acta">
        <title>cDNA and deduced amino acid sequences of a human colon dihydrodiol dehydrogenase.</title>
        <authorList>
            <person name="Ciaccio P.J."/>
            <person name="Tew K.D."/>
        </authorList>
    </citation>
    <scope>NUCLEOTIDE SEQUENCE [MRNA] (ISOFORM 1)</scope>
    <source>
        <tissue>Colon</tissue>
    </source>
</reference>
<reference key="3">
    <citation type="journal article" date="1994" name="Gene">
        <title>Structure of a gene coding for human dihydrodiol dehydrogenase/bile acid-binding protein.</title>
        <authorList>
            <person name="Qin K.-N."/>
            <person name="Khanna M."/>
            <person name="Cheng K.-C."/>
        </authorList>
    </citation>
    <scope>NUCLEOTIDE SEQUENCE [GENOMIC DNA] (ISOFORM 1)</scope>
    <scope>VARIANT TYR-46</scope>
</reference>
<reference key="4">
    <citation type="journal article" date="1996" name="Biochem. Biophys. Res. Commun.">
        <title>Molecular cloning of human type 3 3 alpha-hydroxysteroid dehydrogenase that differs from 20 alpha-hydroxysteroid dehydrogenase by seven amino acids.</title>
        <authorList>
            <person name="Dufort I."/>
            <person name="Soucy P."/>
            <person name="Labrie F."/>
            <person name="Luu-The V."/>
        </authorList>
    </citation>
    <scope>NUCLEOTIDE SEQUENCE [GENOMIC DNA] (ISOFORM 1)</scope>
    <source>
        <tissue>Prostate</tissue>
    </source>
</reference>
<reference key="5">
    <citation type="journal article" date="1998" name="Biochem. J.">
        <title>Sequence of the cDNA of a human dihydrodiol dehydrogenase isoform (AKR1C2) and tissue distribution of its mRNA.</title>
        <authorList>
            <person name="Shiraishi H."/>
            <person name="Ishikura S."/>
            <person name="Matsuura K."/>
            <person name="Deyashiki Y."/>
            <person name="Ninomiya M."/>
            <person name="Sakai S."/>
            <person name="Hara A."/>
        </authorList>
    </citation>
    <scope>NUCLEOTIDE SEQUENCE [MRNA] (ISOFORM 1)</scope>
    <source>
        <tissue>Liver</tissue>
    </source>
</reference>
<reference key="6">
    <citation type="journal article" date="2000" name="Genes Cells">
        <title>Close kinship of human 20alpha-hydroxysteroid dehydrogenase gene with three aldo-keto reductase genes.</title>
        <authorList>
            <person name="Nishizawa M."/>
            <person name="Nakajima T."/>
            <person name="Yasuda K."/>
            <person name="Kanzaki H."/>
            <person name="Sasaguri Y."/>
            <person name="Watanabe K."/>
            <person name="Ito S."/>
        </authorList>
    </citation>
    <scope>NUCLEOTIDE SEQUENCE [GENOMIC DNA / MRNA] (ISOFORM 1)</scope>
    <source>
        <tissue>Liver</tissue>
    </source>
</reference>
<reference key="7">
    <citation type="journal article" date="2004" name="Nat. Genet.">
        <title>Complete sequencing and characterization of 21,243 full-length human cDNAs.</title>
        <authorList>
            <person name="Ota T."/>
            <person name="Suzuki Y."/>
            <person name="Nishikawa T."/>
            <person name="Otsuki T."/>
            <person name="Sugiyama T."/>
            <person name="Irie R."/>
            <person name="Wakamatsu A."/>
            <person name="Hayashi K."/>
            <person name="Sato H."/>
            <person name="Nagai K."/>
            <person name="Kimura K."/>
            <person name="Makita H."/>
            <person name="Sekine M."/>
            <person name="Obayashi M."/>
            <person name="Nishi T."/>
            <person name="Shibahara T."/>
            <person name="Tanaka T."/>
            <person name="Ishii S."/>
            <person name="Yamamoto J."/>
            <person name="Saito K."/>
            <person name="Kawai Y."/>
            <person name="Isono Y."/>
            <person name="Nakamura Y."/>
            <person name="Nagahari K."/>
            <person name="Murakami K."/>
            <person name="Yasuda T."/>
            <person name="Iwayanagi T."/>
            <person name="Wagatsuma M."/>
            <person name="Shiratori A."/>
            <person name="Sudo H."/>
            <person name="Hosoiri T."/>
            <person name="Kaku Y."/>
            <person name="Kodaira H."/>
            <person name="Kondo H."/>
            <person name="Sugawara M."/>
            <person name="Takahashi M."/>
            <person name="Kanda K."/>
            <person name="Yokoi T."/>
            <person name="Furuya T."/>
            <person name="Kikkawa E."/>
            <person name="Omura Y."/>
            <person name="Abe K."/>
            <person name="Kamihara K."/>
            <person name="Katsuta N."/>
            <person name="Sato K."/>
            <person name="Tanikawa M."/>
            <person name="Yamazaki M."/>
            <person name="Ninomiya K."/>
            <person name="Ishibashi T."/>
            <person name="Yamashita H."/>
            <person name="Murakawa K."/>
            <person name="Fujimori K."/>
            <person name="Tanai H."/>
            <person name="Kimata M."/>
            <person name="Watanabe M."/>
            <person name="Hiraoka S."/>
            <person name="Chiba Y."/>
            <person name="Ishida S."/>
            <person name="Ono Y."/>
            <person name="Takiguchi S."/>
            <person name="Watanabe S."/>
            <person name="Yosida M."/>
            <person name="Hotuta T."/>
            <person name="Kusano J."/>
            <person name="Kanehori K."/>
            <person name="Takahashi-Fujii A."/>
            <person name="Hara H."/>
            <person name="Tanase T.-O."/>
            <person name="Nomura Y."/>
            <person name="Togiya S."/>
            <person name="Komai F."/>
            <person name="Hara R."/>
            <person name="Takeuchi K."/>
            <person name="Arita M."/>
            <person name="Imose N."/>
            <person name="Musashino K."/>
            <person name="Yuuki H."/>
            <person name="Oshima A."/>
            <person name="Sasaki N."/>
            <person name="Aotsuka S."/>
            <person name="Yoshikawa Y."/>
            <person name="Matsunawa H."/>
            <person name="Ichihara T."/>
            <person name="Shiohata N."/>
            <person name="Sano S."/>
            <person name="Moriya S."/>
            <person name="Momiyama H."/>
            <person name="Satoh N."/>
            <person name="Takami S."/>
            <person name="Terashima Y."/>
            <person name="Suzuki O."/>
            <person name="Nakagawa S."/>
            <person name="Senoh A."/>
            <person name="Mizoguchi H."/>
            <person name="Goto Y."/>
            <person name="Shimizu F."/>
            <person name="Wakebe H."/>
            <person name="Hishigaki H."/>
            <person name="Watanabe T."/>
            <person name="Sugiyama A."/>
            <person name="Takemoto M."/>
            <person name="Kawakami B."/>
            <person name="Yamazaki M."/>
            <person name="Watanabe K."/>
            <person name="Kumagai A."/>
            <person name="Itakura S."/>
            <person name="Fukuzumi Y."/>
            <person name="Fujimori Y."/>
            <person name="Komiyama M."/>
            <person name="Tashiro H."/>
            <person name="Tanigami A."/>
            <person name="Fujiwara T."/>
            <person name="Ono T."/>
            <person name="Yamada K."/>
            <person name="Fujii Y."/>
            <person name="Ozaki K."/>
            <person name="Hirao M."/>
            <person name="Ohmori Y."/>
            <person name="Kawabata A."/>
            <person name="Hikiji T."/>
            <person name="Kobatake N."/>
            <person name="Inagaki H."/>
            <person name="Ikema Y."/>
            <person name="Okamoto S."/>
            <person name="Okitani R."/>
            <person name="Kawakami T."/>
            <person name="Noguchi S."/>
            <person name="Itoh T."/>
            <person name="Shigeta K."/>
            <person name="Senba T."/>
            <person name="Matsumura K."/>
            <person name="Nakajima Y."/>
            <person name="Mizuno T."/>
            <person name="Morinaga M."/>
            <person name="Sasaki M."/>
            <person name="Togashi T."/>
            <person name="Oyama M."/>
            <person name="Hata H."/>
            <person name="Watanabe M."/>
            <person name="Komatsu T."/>
            <person name="Mizushima-Sugano J."/>
            <person name="Satoh T."/>
            <person name="Shirai Y."/>
            <person name="Takahashi Y."/>
            <person name="Nakagawa K."/>
            <person name="Okumura K."/>
            <person name="Nagase T."/>
            <person name="Nomura N."/>
            <person name="Kikuchi H."/>
            <person name="Masuho Y."/>
            <person name="Yamashita R."/>
            <person name="Nakai K."/>
            <person name="Yada T."/>
            <person name="Nakamura Y."/>
            <person name="Ohara O."/>
            <person name="Isogai T."/>
            <person name="Sugano S."/>
        </authorList>
    </citation>
    <scope>NUCLEOTIDE SEQUENCE [LARGE SCALE MRNA] (ISOFORMS 1 AND 2)</scope>
    <source>
        <tissue>Tongue</tissue>
    </source>
</reference>
<reference key="8">
    <citation type="submission" date="2003-05" db="EMBL/GenBank/DDBJ databases">
        <title>Cloning of human full-length CDSs in BD Creator(TM) system donor vector.</title>
        <authorList>
            <person name="Kalnine N."/>
            <person name="Chen X."/>
            <person name="Rolfs A."/>
            <person name="Halleck A."/>
            <person name="Hines L."/>
            <person name="Eisenstein S."/>
            <person name="Koundinya M."/>
            <person name="Raphael J."/>
            <person name="Moreira D."/>
            <person name="Kelley T."/>
            <person name="LaBaer J."/>
            <person name="Lin Y."/>
            <person name="Phelan M."/>
            <person name="Farmer A."/>
        </authorList>
    </citation>
    <scope>NUCLEOTIDE SEQUENCE [LARGE SCALE MRNA] (ISOFORM 1)</scope>
</reference>
<reference key="9">
    <citation type="journal article" date="2004" name="Nature">
        <title>The DNA sequence and comparative analysis of human chromosome 10.</title>
        <authorList>
            <person name="Deloukas P."/>
            <person name="Earthrowl M.E."/>
            <person name="Grafham D.V."/>
            <person name="Rubenfield M."/>
            <person name="French L."/>
            <person name="Steward C.A."/>
            <person name="Sims S.K."/>
            <person name="Jones M.C."/>
            <person name="Searle S."/>
            <person name="Scott C."/>
            <person name="Howe K."/>
            <person name="Hunt S.E."/>
            <person name="Andrews T.D."/>
            <person name="Gilbert J.G.R."/>
            <person name="Swarbreck D."/>
            <person name="Ashurst J.L."/>
            <person name="Taylor A."/>
            <person name="Battles J."/>
            <person name="Bird C.P."/>
            <person name="Ainscough R."/>
            <person name="Almeida J.P."/>
            <person name="Ashwell R.I.S."/>
            <person name="Ambrose K.D."/>
            <person name="Babbage A.K."/>
            <person name="Bagguley C.L."/>
            <person name="Bailey J."/>
            <person name="Banerjee R."/>
            <person name="Bates K."/>
            <person name="Beasley H."/>
            <person name="Bray-Allen S."/>
            <person name="Brown A.J."/>
            <person name="Brown J.Y."/>
            <person name="Burford D.C."/>
            <person name="Burrill W."/>
            <person name="Burton J."/>
            <person name="Cahill P."/>
            <person name="Camire D."/>
            <person name="Carter N.P."/>
            <person name="Chapman J.C."/>
            <person name="Clark S.Y."/>
            <person name="Clarke G."/>
            <person name="Clee C.M."/>
            <person name="Clegg S."/>
            <person name="Corby N."/>
            <person name="Coulson A."/>
            <person name="Dhami P."/>
            <person name="Dutta I."/>
            <person name="Dunn M."/>
            <person name="Faulkner L."/>
            <person name="Frankish A."/>
            <person name="Frankland J.A."/>
            <person name="Garner P."/>
            <person name="Garnett J."/>
            <person name="Gribble S."/>
            <person name="Griffiths C."/>
            <person name="Grocock R."/>
            <person name="Gustafson E."/>
            <person name="Hammond S."/>
            <person name="Harley J.L."/>
            <person name="Hart E."/>
            <person name="Heath P.D."/>
            <person name="Ho T.P."/>
            <person name="Hopkins B."/>
            <person name="Horne J."/>
            <person name="Howden P.J."/>
            <person name="Huckle E."/>
            <person name="Hynds C."/>
            <person name="Johnson C."/>
            <person name="Johnson D."/>
            <person name="Kana A."/>
            <person name="Kay M."/>
            <person name="Kimberley A.M."/>
            <person name="Kershaw J.K."/>
            <person name="Kokkinaki M."/>
            <person name="Laird G.K."/>
            <person name="Lawlor S."/>
            <person name="Lee H.M."/>
            <person name="Leongamornlert D.A."/>
            <person name="Laird G."/>
            <person name="Lloyd C."/>
            <person name="Lloyd D.M."/>
            <person name="Loveland J."/>
            <person name="Lovell J."/>
            <person name="McLaren S."/>
            <person name="McLay K.E."/>
            <person name="McMurray A."/>
            <person name="Mashreghi-Mohammadi M."/>
            <person name="Matthews L."/>
            <person name="Milne S."/>
            <person name="Nickerson T."/>
            <person name="Nguyen M."/>
            <person name="Overton-Larty E."/>
            <person name="Palmer S.A."/>
            <person name="Pearce A.V."/>
            <person name="Peck A.I."/>
            <person name="Pelan S."/>
            <person name="Phillimore B."/>
            <person name="Porter K."/>
            <person name="Rice C.M."/>
            <person name="Rogosin A."/>
            <person name="Ross M.T."/>
            <person name="Sarafidou T."/>
            <person name="Sehra H.K."/>
            <person name="Shownkeen R."/>
            <person name="Skuce C.D."/>
            <person name="Smith M."/>
            <person name="Standring L."/>
            <person name="Sycamore N."/>
            <person name="Tester J."/>
            <person name="Thorpe A."/>
            <person name="Torcasso W."/>
            <person name="Tracey A."/>
            <person name="Tromans A."/>
            <person name="Tsolas J."/>
            <person name="Wall M."/>
            <person name="Walsh J."/>
            <person name="Wang H."/>
            <person name="Weinstock K."/>
            <person name="West A.P."/>
            <person name="Willey D.L."/>
            <person name="Whitehead S.L."/>
            <person name="Wilming L."/>
            <person name="Wray P.W."/>
            <person name="Young L."/>
            <person name="Chen Y."/>
            <person name="Lovering R.C."/>
            <person name="Moschonas N.K."/>
            <person name="Siebert R."/>
            <person name="Fechtel K."/>
            <person name="Bentley D."/>
            <person name="Durbin R.M."/>
            <person name="Hubbard T."/>
            <person name="Doucette-Stamm L."/>
            <person name="Beck S."/>
            <person name="Smith D.R."/>
            <person name="Rogers J."/>
        </authorList>
    </citation>
    <scope>NUCLEOTIDE SEQUENCE [LARGE SCALE GENOMIC DNA]</scope>
</reference>
<reference key="10">
    <citation type="journal article" date="2004" name="Genome Res.">
        <title>The status, quality, and expansion of the NIH full-length cDNA project: the Mammalian Gene Collection (MGC).</title>
        <authorList>
            <consortium name="The MGC Project Team"/>
        </authorList>
    </citation>
    <scope>NUCLEOTIDE SEQUENCE [LARGE SCALE MRNA] (ISOFORM 1)</scope>
    <source>
        <tissue>Lung</tissue>
        <tissue>Urinary bladder</tissue>
    </source>
</reference>
<reference key="11">
    <citation type="journal article" date="1996" name="Biochem. J.">
        <title>Relationship of human liver dihydrodiol dehydrogenases to hepatic bile-acid-binding protein and an oxidoreductase of human colon cells.</title>
        <authorList>
            <person name="Hara A."/>
            <person name="Matsuura K."/>
            <person name="Tamada Y."/>
            <person name="Sato K."/>
            <person name="Miyabe Y."/>
            <person name="Deyashiki Y."/>
            <person name="Ishida N."/>
        </authorList>
    </citation>
    <scope>PROTEIN SEQUENCE OF 2-31; 40-62; 69-100; 105-131; 137-153; 162-206; 209-231; 250-269 AND 271-323</scope>
    <scope>FUNCTION</scope>
    <scope>CATALYTIC ACTIVITY</scope>
    <scope>ACTIVITY REGULATION</scope>
    <scope>BIOPHYSICOCHEMICAL PROPERTIES</scope>
</reference>
<reference key="12">
    <citation type="journal article" date="1993" name="J. Biol. Chem.">
        <title>cDNA cloning and expression of the human hepatic bile acid-binding protein. A member of the monomeric reductase gene family.</title>
        <authorList>
            <person name="Stolz A."/>
            <person name="Hammond L."/>
            <person name="Lou H."/>
            <person name="Takikawa H."/>
            <person name="Ronk M."/>
            <person name="Shively J.E."/>
        </authorList>
    </citation>
    <scope>PROTEIN SEQUENCE OF 10-29; 40-55; 76-101; 105-128; 137-146; 162-197; 208-223; 259-270 AND 305-322</scope>
    <scope>SUBCELLULAR LOCATION</scope>
    <source>
        <tissue>Liver</tissue>
    </source>
</reference>
<reference key="13">
    <citation type="journal article" date="2000" name="Biochem. J.">
        <title>Human 3alpha-hydroxysteroid dehydrogenase isoforms (AKR1C1-AKR1C4) of the aldo-keto reductase superfamily: functional plasticity and tissue distribution reveals roles in the inactivation and formation of male and female sex hormones.</title>
        <authorList>
            <person name="Penning T.M."/>
            <person name="Burczynski M.E."/>
            <person name="Jez J.M."/>
            <person name="Hung C.F."/>
            <person name="Lin H.K."/>
            <person name="Ma H."/>
            <person name="Moore M."/>
            <person name="Palackal N."/>
            <person name="Ratnam K."/>
        </authorList>
    </citation>
    <scope>FUNCTION</scope>
    <scope>CATALYTIC ACTIVITY</scope>
    <scope>BIOPHYSICOCHEMICAL PROPERTIES</scope>
    <scope>SUBSTRATE SPECIFICITY</scope>
</reference>
<reference key="14">
    <citation type="journal article" date="2004" name="J. Biol. Chem.">
        <title>Human cytosolic 3alpha-hydroxysteroid dehydrogenases of the aldo-keto reductase superfamily display significant 3beta-hydroxysteroid dehydrogenase activity: implications for steroid hormone metabolism and action.</title>
        <authorList>
            <person name="Steckelbroeck S."/>
            <person name="Jin Y."/>
            <person name="Gopishetty S."/>
            <person name="Oyesanmi B."/>
            <person name="Penning T.M."/>
        </authorList>
    </citation>
    <scope>FUNCTION</scope>
    <scope>CATALYTIC ACTIVITY</scope>
    <scope>PATHWAY</scope>
    <scope>ACTIVITY REGULATION</scope>
</reference>
<reference key="15">
    <citation type="journal article" date="2009" name="J. Biol. Chem.">
        <title>Human cytosolic hydroxysteroid dehydrogenases of the aldo-ketoreductase superfamily catalyze reduction of conjugated steroids: implications for phase I and phase II steroid hormone metabolism.</title>
        <authorList>
            <person name="Jin Y."/>
            <person name="Duan L."/>
            <person name="Lee S.H."/>
            <person name="Kloosterboer H.J."/>
            <person name="Blair I.A."/>
            <person name="Penning T.M."/>
        </authorList>
    </citation>
    <scope>FUNCTION</scope>
    <scope>CATALYTIC ACTIVITY</scope>
    <scope>BIOPHYSICOCHEMICAL PROPERTIES</scope>
</reference>
<reference key="16">
    <citation type="journal article" date="2011" name="Am. J. Hum. Genet.">
        <title>Why boys will be boys: two pathways of fetal testicular androgen biosynthesis are needed for male sexual differentiation.</title>
        <authorList>
            <person name="Fluck C.E."/>
            <person name="Meyer-Boni M."/>
            <person name="Pandey A.V."/>
            <person name="Kempna P."/>
            <person name="Miller W.L."/>
            <person name="Schoenle E.J."/>
            <person name="Biason-Lauber A."/>
        </authorList>
    </citation>
    <scope>TISSUE SPECIFICITY</scope>
    <scope>VARIANTS SRXY8 VAL-79; GLN-90; GLN-222 AND THR-300</scope>
    <scope>CHARACTERIZATION OF VARIANTS SRXY8 VAL-79; GLN-90; GLN-222 AND THR-300</scope>
</reference>
<reference key="17">
    <citation type="journal article" date="2001" name="Biochemistry">
        <title>Crystal structure of human type III 3alpha-hydroxysteroid dehydrogenase/bile acid binding protein complexed with NADP(+) and ursodeoxycholate.</title>
        <authorList>
            <person name="Jin Y."/>
            <person name="Stayrook S.E."/>
            <person name="Albert R.H."/>
            <person name="Palackal N.T."/>
            <person name="Penning T.M."/>
            <person name="Lewis M."/>
        </authorList>
    </citation>
    <scope>X-RAY CRYSTALLOGRAPHY (3.0 ANGSTROMS) IN COMPLEX WITH NADP AND URSODEOXYCHOLATE</scope>
</reference>
<reference key="18">
    <citation type="journal article" date="2001" name="J. Biol. Chem.">
        <title>Structure of the human 3alpha-hydroxysteroid dehydrogenase type 3 in complex with testosterone and NADP at 1.25-A resolution.</title>
        <authorList>
            <person name="Nahoum V."/>
            <person name="Gangloff A."/>
            <person name="Legrand P."/>
            <person name="Zhu D.-W."/>
            <person name="Cantin L."/>
            <person name="Zhorov B.S."/>
            <person name="Luu-The V."/>
            <person name="Labrie F."/>
            <person name="Breton R."/>
            <person name="Lin S.X."/>
        </authorList>
    </citation>
    <scope>X-RAY CRYSTALLOGRAPHY (1.25 ANGSTROMS) IN COMPLEX WITH NADP AND TESTOSTERONE</scope>
</reference>
<reference key="19">
    <citation type="journal article" date="2005" name="Protein Sci.">
        <title>Comparison of crystal structures of human type 3 3alpha-hydroxysteroid dehydrogenase reveals an 'induced-fit' mechanism and a conserved basic motif involved in the binding of androgen.</title>
        <authorList>
            <person name="Couture J.F."/>
            <person name="de Jesus-Tran K.P."/>
            <person name="Roy A.M."/>
            <person name="Cantin L."/>
            <person name="Cote P.L."/>
            <person name="Legrand P."/>
            <person name="Luu-The V."/>
            <person name="Labrie F."/>
            <person name="Breton R."/>
        </authorList>
    </citation>
    <scope>X-RAY CRYSTALLOGRAPHY (1.90 ANGSTROMS) OF 2-323 IN COMPLEX WITH NADP</scope>
    <scope>FUNCTION</scope>
    <scope>CATALYTIC ACTIVITY</scope>
    <scope>MUTAGENESIS OF ARG-301 AND ARG-304</scope>
</reference>
<reference key="20">
    <citation type="journal article" date="2006" name="J. Mol. Biol.">
        <title>Crystal structures of mouse 17alpha-hydroxysteroid dehydrogenase (apoenzyme and enzyme-NADP(H) binary complex): identification of molecular determinants responsible for the unique 17alpha-reductive activity of this enzyme.</title>
        <authorList>
            <person name="Faucher F."/>
            <person name="Pereira de Jesus-Tran K."/>
            <person name="Cantin L."/>
            <person name="Luu-The V."/>
            <person name="Labrie F."/>
            <person name="Breton R."/>
        </authorList>
    </citation>
    <scope>X-RAY CRYSTALLOGRAPHY (2.00 ANGSTROMS) IN COMPLEX WITH NADP</scope>
    <scope>FUNCTION</scope>
    <scope>CATALYTIC ACTIVITY</scope>
</reference>
<reference key="21">
    <citation type="journal article" date="2007" name="J. Mol. Biol.">
        <title>Mouse 17alpha-hydroxysteroid dehydrogenase (AKR1C21) binds steroids differently from other aldo-keto reductases: identification and characterization of amino acid residues critical for substrate binding.</title>
        <authorList>
            <person name="Faucher F."/>
            <person name="Cantin L."/>
            <person name="Pereira de Jesus-Tran K."/>
            <person name="Lemieux M."/>
            <person name="Luu-The V."/>
            <person name="Labrie F."/>
            <person name="Breton R."/>
        </authorList>
    </citation>
    <scope>X-RAY CRYSTALLOGRAPHY (1.80 ANGSTROMS) OF 3-323 IN COMPLEX WITH NADP AND HYDROXYANDROSTERONE</scope>
    <scope>FUNCTION</scope>
    <scope>CATALYTIC ACTIVITY</scope>
    <scope>MUTAGENESIS OF TYR-24 AND LYS-31</scope>
</reference>
<gene>
    <name type="primary">AKR1C2</name>
    <name type="synonym">DDH2</name>
</gene>
<comment type="function">
    <text evidence="2 5 6 7 8 9 12 13">Cytosolic aldo-keto reductase that catalyzes the NADH and NADPH-dependent reduction of ketosteroids to hydroxysteroids (PubMed:19218247). Most probably acts as a reductase in vivo since the oxidase activity measured in vitro is inhibited by physiological concentrations of NADPH (PubMed:14672942). Displays a broad positional specificity acting on positions 3, 17 and 20 of steroids and regulates the metabolism of hormones like estrogens and androgens (PubMed:10998348). Works in concert with the 5-alpha/5-beta-steroid reductases to convert steroid hormones into the 3-alpha/5-alpha and 3-alpha/5-beta-tetrahydrosteroids. Catalyzes the inactivation of the most potent androgen 5-alpha-dihydrotestosterone (5-alpha-DHT) to 5-alpha-androstane-3-alpha,17-beta-diol (3-alpha-diol) (PubMed:15929998, PubMed:17034817, PubMed:17442338, PubMed:8573067). Also specifically able to produce 17beta-hydroxy-5alpha-androstan-3-one/5alphaDHT (PubMed:10998348). May also reduce conjugated steroids such as 5alpha-dihydrotestosterone sulfate (PubMed:19218247). Displays affinity for bile acids (PubMed:8486699).</text>
</comment>
<comment type="catalytic activity">
    <reaction evidence="6 7 8 13">
        <text>a 3alpha-hydroxysteroid + NADP(+) = a 3-oxosteroid + NADPH + H(+)</text>
        <dbReference type="Rhea" id="RHEA:34783"/>
        <dbReference type="ChEBI" id="CHEBI:15378"/>
        <dbReference type="ChEBI" id="CHEBI:36835"/>
        <dbReference type="ChEBI" id="CHEBI:47788"/>
        <dbReference type="ChEBI" id="CHEBI:57783"/>
        <dbReference type="ChEBI" id="CHEBI:58349"/>
        <dbReference type="EC" id="1.1.1.357"/>
    </reaction>
</comment>
<comment type="catalytic activity">
    <reaction evidence="6 7 8 13">
        <text>a 3alpha-hydroxysteroid + NAD(+) = a 3-oxosteroid + NADH + H(+)</text>
        <dbReference type="Rhea" id="RHEA:34779"/>
        <dbReference type="ChEBI" id="CHEBI:15378"/>
        <dbReference type="ChEBI" id="CHEBI:36835"/>
        <dbReference type="ChEBI" id="CHEBI:47788"/>
        <dbReference type="ChEBI" id="CHEBI:57540"/>
        <dbReference type="ChEBI" id="CHEBI:57945"/>
        <dbReference type="EC" id="1.1.1.357"/>
    </reaction>
</comment>
<comment type="catalytic activity">
    <reaction evidence="2 5 9">
        <text>5alpha-androstane-3alpha,17beta-diol + NADP(+) = 17beta-hydroxy-5alpha-androstan-3-one + NADPH + H(+)</text>
        <dbReference type="Rhea" id="RHEA:42116"/>
        <dbReference type="ChEBI" id="CHEBI:15378"/>
        <dbReference type="ChEBI" id="CHEBI:16330"/>
        <dbReference type="ChEBI" id="CHEBI:36713"/>
        <dbReference type="ChEBI" id="CHEBI:57783"/>
        <dbReference type="ChEBI" id="CHEBI:58349"/>
    </reaction>
    <physiologicalReaction direction="left-to-right" evidence="2">
        <dbReference type="Rhea" id="RHEA:42117"/>
    </physiologicalReaction>
    <physiologicalReaction direction="right-to-left" evidence="2 5 9">
        <dbReference type="Rhea" id="RHEA:42118"/>
    </physiologicalReaction>
</comment>
<comment type="catalytic activity">
    <reaction evidence="2 5">
        <text>5alpha-androstane-3alpha,17beta-diol + NAD(+) = 17beta-hydroxy-5alpha-androstan-3-one + NADH + H(+)</text>
        <dbReference type="Rhea" id="RHEA:42004"/>
        <dbReference type="ChEBI" id="CHEBI:15378"/>
        <dbReference type="ChEBI" id="CHEBI:16330"/>
        <dbReference type="ChEBI" id="CHEBI:36713"/>
        <dbReference type="ChEBI" id="CHEBI:57540"/>
        <dbReference type="ChEBI" id="CHEBI:57945"/>
        <dbReference type="EC" id="1.1.1.53"/>
    </reaction>
    <physiologicalReaction direction="left-to-right" evidence="2 5">
        <dbReference type="Rhea" id="RHEA:42005"/>
    </physiologicalReaction>
    <physiologicalReaction direction="right-to-left" evidence="2">
        <dbReference type="Rhea" id="RHEA:42006"/>
    </physiologicalReaction>
</comment>
<comment type="catalytic activity">
    <reaction evidence="5">
        <text>5alpha-androstane-3alpha,17beta-diol + NAD(+) = androsterone + NADH + H(+)</text>
        <dbReference type="Rhea" id="RHEA:42124"/>
        <dbReference type="ChEBI" id="CHEBI:15378"/>
        <dbReference type="ChEBI" id="CHEBI:16032"/>
        <dbReference type="ChEBI" id="CHEBI:36713"/>
        <dbReference type="ChEBI" id="CHEBI:57540"/>
        <dbReference type="ChEBI" id="CHEBI:57945"/>
    </reaction>
    <physiologicalReaction direction="left-to-right" evidence="5">
        <dbReference type="Rhea" id="RHEA:42125"/>
    </physiologicalReaction>
</comment>
<comment type="catalytic activity">
    <reaction evidence="2">
        <text>17beta-estradiol + NADP(+) = estrone + NADPH + H(+)</text>
        <dbReference type="Rhea" id="RHEA:24616"/>
        <dbReference type="ChEBI" id="CHEBI:15378"/>
        <dbReference type="ChEBI" id="CHEBI:16469"/>
        <dbReference type="ChEBI" id="CHEBI:17263"/>
        <dbReference type="ChEBI" id="CHEBI:57783"/>
        <dbReference type="ChEBI" id="CHEBI:58349"/>
        <dbReference type="EC" id="1.1.1.62"/>
    </reaction>
    <physiologicalReaction direction="left-to-right" evidence="2">
        <dbReference type="Rhea" id="RHEA:24617"/>
    </physiologicalReaction>
    <physiologicalReaction direction="right-to-left" evidence="2">
        <dbReference type="Rhea" id="RHEA:24618"/>
    </physiologicalReaction>
</comment>
<comment type="catalytic activity">
    <reaction evidence="2">
        <text>17beta-estradiol + NAD(+) = estrone + NADH + H(+)</text>
        <dbReference type="Rhea" id="RHEA:24612"/>
        <dbReference type="ChEBI" id="CHEBI:15378"/>
        <dbReference type="ChEBI" id="CHEBI:16469"/>
        <dbReference type="ChEBI" id="CHEBI:17263"/>
        <dbReference type="ChEBI" id="CHEBI:57540"/>
        <dbReference type="ChEBI" id="CHEBI:57945"/>
        <dbReference type="EC" id="1.1.1.62"/>
    </reaction>
    <physiologicalReaction direction="left-to-right" evidence="2">
        <dbReference type="Rhea" id="RHEA:24613"/>
    </physiologicalReaction>
    <physiologicalReaction direction="right-to-left" evidence="2">
        <dbReference type="Rhea" id="RHEA:24614"/>
    </physiologicalReaction>
</comment>
<comment type="catalytic activity">
    <reaction evidence="2">
        <text>(20S)-hydroxypregn-4-en-3-one + NADP(+) = progesterone + NADPH + H(+)</text>
        <dbReference type="Rhea" id="RHEA:42112"/>
        <dbReference type="ChEBI" id="CHEBI:15378"/>
        <dbReference type="ChEBI" id="CHEBI:17026"/>
        <dbReference type="ChEBI" id="CHEBI:28453"/>
        <dbReference type="ChEBI" id="CHEBI:57783"/>
        <dbReference type="ChEBI" id="CHEBI:58349"/>
    </reaction>
    <physiologicalReaction direction="left-to-right" evidence="2">
        <dbReference type="Rhea" id="RHEA:42113"/>
    </physiologicalReaction>
    <physiologicalReaction direction="right-to-left" evidence="2">
        <dbReference type="Rhea" id="RHEA:42114"/>
    </physiologicalReaction>
</comment>
<comment type="catalytic activity">
    <reaction evidence="2">
        <text>(20S)-hydroxypregn-4-en-3-one + NAD(+) = progesterone + NADH + H(+)</text>
        <dbReference type="Rhea" id="RHEA:42108"/>
        <dbReference type="ChEBI" id="CHEBI:15378"/>
        <dbReference type="ChEBI" id="CHEBI:17026"/>
        <dbReference type="ChEBI" id="CHEBI:28453"/>
        <dbReference type="ChEBI" id="CHEBI:57540"/>
        <dbReference type="ChEBI" id="CHEBI:57945"/>
    </reaction>
    <physiologicalReaction direction="left-to-right" evidence="2">
        <dbReference type="Rhea" id="RHEA:42109"/>
    </physiologicalReaction>
    <physiologicalReaction direction="right-to-left" evidence="2">
        <dbReference type="Rhea" id="RHEA:42110"/>
    </physiologicalReaction>
</comment>
<comment type="catalytic activity">
    <reaction evidence="2">
        <text>androsterone + NADP(+) = 5alpha-androstan-3,17-dione + NADPH + H(+)</text>
        <dbReference type="Rhea" id="RHEA:20377"/>
        <dbReference type="ChEBI" id="CHEBI:15378"/>
        <dbReference type="ChEBI" id="CHEBI:15994"/>
        <dbReference type="ChEBI" id="CHEBI:16032"/>
        <dbReference type="ChEBI" id="CHEBI:57783"/>
        <dbReference type="ChEBI" id="CHEBI:58349"/>
        <dbReference type="EC" id="1.1.1.209"/>
    </reaction>
    <physiologicalReaction direction="left-to-right" evidence="2">
        <dbReference type="Rhea" id="RHEA:20378"/>
    </physiologicalReaction>
</comment>
<comment type="catalytic activity">
    <reaction evidence="9">
        <text>(3beta,5alpha,17beta)-3-hydroxy-androstan-17-yl sulfate + NADP(+) = 5alpha-dihydrotestosterone sulfate + NADPH + H(+)</text>
        <dbReference type="Rhea" id="RHEA:53136"/>
        <dbReference type="ChEBI" id="CHEBI:15378"/>
        <dbReference type="ChEBI" id="CHEBI:57783"/>
        <dbReference type="ChEBI" id="CHEBI:58349"/>
        <dbReference type="ChEBI" id="CHEBI:133105"/>
        <dbReference type="ChEBI" id="CHEBI:136982"/>
    </reaction>
    <physiologicalReaction direction="right-to-left" evidence="9">
        <dbReference type="Rhea" id="RHEA:53138"/>
    </physiologicalReaction>
</comment>
<comment type="catalytic activity">
    <reaction evidence="13">
        <text>(1R,2R)-1,2-dihydrobenzene-1,2-diol + NADP(+) = catechol + NADPH + H(+)</text>
        <dbReference type="Rhea" id="RHEA:16729"/>
        <dbReference type="ChEBI" id="CHEBI:10702"/>
        <dbReference type="ChEBI" id="CHEBI:15378"/>
        <dbReference type="ChEBI" id="CHEBI:18135"/>
        <dbReference type="ChEBI" id="CHEBI:57783"/>
        <dbReference type="ChEBI" id="CHEBI:58349"/>
        <dbReference type="EC" id="1.3.1.20"/>
    </reaction>
</comment>
<comment type="catalytic activity">
    <reaction evidence="13">
        <text>(S)-indan-1-ol + NAD(+) = indan-1-one + NADH + H(+)</text>
        <dbReference type="Rhea" id="RHEA:16317"/>
        <dbReference type="ChEBI" id="CHEBI:15378"/>
        <dbReference type="ChEBI" id="CHEBI:17404"/>
        <dbReference type="ChEBI" id="CHEBI:57540"/>
        <dbReference type="ChEBI" id="CHEBI:57945"/>
        <dbReference type="ChEBI" id="CHEBI:156384"/>
        <dbReference type="EC" id="1.1.1.112"/>
    </reaction>
</comment>
<comment type="catalytic activity">
    <reaction evidence="13">
        <text>(S)-indan-1-ol + NADP(+) = indan-1-one + NADPH + H(+)</text>
        <dbReference type="Rhea" id="RHEA:16321"/>
        <dbReference type="ChEBI" id="CHEBI:15378"/>
        <dbReference type="ChEBI" id="CHEBI:17404"/>
        <dbReference type="ChEBI" id="CHEBI:57783"/>
        <dbReference type="ChEBI" id="CHEBI:58349"/>
        <dbReference type="ChEBI" id="CHEBI:156384"/>
        <dbReference type="EC" id="1.1.1.112"/>
    </reaction>
</comment>
<comment type="activity regulation">
    <text evidence="5 13">Inhibited by hexestrol with an IC(50) of 2.8 uM, 1,10-phenanthroline with an IC(50) of 2100 uM, 1,7-phenanthroline with an IC(50) of 1500 uM, flufenamic acid with an IC(50) of 0.9 uM, indomethacin with an IC(50) of 75 uM, ibuprofen with an IC(50) of 6.9 uM, lithocholic acid with an IC(50) of 0.07 uM, ursodeoxycholic acid with an IC(50) of 0.08 uM and chenodeoxycholic acid with an IC(50) of 0.13 uM (PubMed:8573067). The oxidation reaction is inhibited by low micromolar concentrations of NADPH (PubMed:14672942).</text>
</comment>
<comment type="biophysicochemical properties">
    <kinetics>
        <KM evidence="13">260 uM for (s)-tetralol</KM>
        <KM evidence="13">520 uM for (s)-indan-1-ol</KM>
        <KM evidence="13">5000 uM for benzene dihydrodiol</KM>
        <KM evidence="13">1 uM for 5-beta-pregnane-3-alpha,20-alpha-diol</KM>
        <KM evidence="13">208 uM for 9-alpha,11-beta-prostaglandin F(2)</KM>
        <KM evidence="13">0.3 uM for 5-beta-androstane-3,17-dione</KM>
        <KM evidence="13">79 uM for prostaglandin D2</KM>
        <KM evidence="2">26 uM for 17beta-hydroxy-5alpha-androstan-3-one (in the reduction assay)</KM>
        <KM evidence="9">2.9 uM for 17beta-hydroxy-5alpha-androstan-3-one (in the reduction assay)</KM>
        <KM evidence="2">6.26 uM for 5alpha-androstan-3,17-dione (in the reduction assay)</KM>
        <KM evidence="2">9.73 uM for 3alpha-hydroxy-5alpha-androstan-17-one/androsterone (in the oxidation assay)</KM>
        <KM evidence="2">22 uM for 5alpha-androstane-3alpha,17beta-diol (in the oxidation assay)</KM>
        <KM evidence="9">4.2 uM for 5alpha-dihydrotestosterone sulfate (in the reduction assay)</KM>
        <Vmax evidence="2">6.24 nmol/min/mg enzyme for the reduction of 17beta-hydroxy-5alpha-androstan-3-one</Vmax>
        <Vmax evidence="2">37.8 nmol/min/mg enzyme for the reduction of 5alpha-androstan-3,17-dione</Vmax>
        <Vmax evidence="2">11.3 nmol/min/mg enzyme for the oxidation of 3alpha-hydroxy-5alpha-androstan-17-one/androsterone</Vmax>
        <Vmax evidence="2">6.58 nmol/min/mg enzyme for the oxidation of 5alpha-androstane-3alpha,17beta-diol</Vmax>
        <text evidence="2 9">kcat is 0.66 min-1 for the reduction of 17beta-hydroxy-5alpha-androstan-3-one (PubMed:10998348). kcat is 1.98 min-1 for the reduction of 17beta-hydroxy-5alpha-androstan-3-one (PubMed:19218247). kcat is 1.39 min-1 for the reduction of 5alpha-androstan-3,17-dione (PubMed:10998348). kcat is 0.42 min-1 for the oxidation of 3alpha-hydroxy-5alpha-androstan-17-one/androsterone (PubMed:10998348). kcat is 0.24 min-1 for the oxidation of 5alpha-androstane-3alpha,17beta-diol (PubMed:10998348). kcat is 1.0 min-1 for the reduction of 5alpha-dihydrotestosterone sulfate (PubMed:19218247).</text>
    </kinetics>
</comment>
<comment type="pathway">
    <text evidence="5">Steroid metabolism.</text>
</comment>
<comment type="subcellular location">
    <subcellularLocation>
        <location evidence="17">Cytoplasm</location>
        <location evidence="17">Cytosol</location>
    </subcellularLocation>
</comment>
<comment type="alternative products">
    <event type="alternative splicing"/>
    <isoform>
        <id>P52895-1</id>
        <name>1</name>
        <sequence type="displayed"/>
    </isoform>
    <isoform>
        <id>P52895-2</id>
        <name>2</name>
        <sequence type="described" ref="VSP_043779 VSP_043780"/>
    </isoform>
</comment>
<comment type="tissue specificity">
    <text evidence="10">Expressed in fetal testes. Expressed in fetal and adult adrenal glands.</text>
</comment>
<comment type="disease" evidence="10">
    <disease id="DI-03279">
        <name>46,XY sex reversal 8</name>
        <acronym>SRXY8</acronym>
        <description>A disorder of sex development. Affected individuals have a 46,XY karyotype but present as phenotypically normal females.</description>
        <dbReference type="MIM" id="614279"/>
    </disease>
    <text>The disease is caused by variants affecting the gene represented in this entry.</text>
</comment>
<comment type="similarity">
    <text evidence="16">Belongs to the aldo/keto reductase family.</text>
</comment>
<evidence type="ECO:0000250" key="1"/>
<evidence type="ECO:0000269" key="2">
    <source>
    </source>
</evidence>
<evidence type="ECO:0000269" key="3">
    <source>
    </source>
</evidence>
<evidence type="ECO:0000269" key="4">
    <source>
    </source>
</evidence>
<evidence type="ECO:0000269" key="5">
    <source>
    </source>
</evidence>
<evidence type="ECO:0000269" key="6">
    <source>
    </source>
</evidence>
<evidence type="ECO:0000269" key="7">
    <source>
    </source>
</evidence>
<evidence type="ECO:0000269" key="8">
    <source>
    </source>
</evidence>
<evidence type="ECO:0000269" key="9">
    <source>
    </source>
</evidence>
<evidence type="ECO:0000269" key="10">
    <source>
    </source>
</evidence>
<evidence type="ECO:0000269" key="11">
    <source>
    </source>
</evidence>
<evidence type="ECO:0000269" key="12">
    <source>
    </source>
</evidence>
<evidence type="ECO:0000269" key="13">
    <source>
    </source>
</evidence>
<evidence type="ECO:0000303" key="14">
    <source>
    </source>
</evidence>
<evidence type="ECO:0000303" key="15">
    <source>
    </source>
</evidence>
<evidence type="ECO:0000305" key="16"/>
<evidence type="ECO:0000305" key="17">
    <source>
    </source>
</evidence>
<evidence type="ECO:0007829" key="18">
    <source>
        <dbReference type="PDB" id="4JQA"/>
    </source>
</evidence>
<evidence type="ECO:0007829" key="19">
    <source>
        <dbReference type="PDB" id="4XO6"/>
    </source>
</evidence>
<proteinExistence type="evidence at protein level"/>
<dbReference type="EC" id="1.-.-.-" evidence="2 5 6 7 8 9 13"/>
<dbReference type="EC" id="1.1.1.112" evidence="13"/>
<dbReference type="EC" id="1.1.1.209" evidence="2"/>
<dbReference type="EC" id="1.1.1.53" evidence="2 5"/>
<dbReference type="EC" id="1.1.1.62" evidence="2"/>
<dbReference type="EC" id="1.3.1.20" evidence="13"/>
<dbReference type="EC" id="1.1.1.357" evidence="6 7 8 13"/>
<dbReference type="EMBL" id="S68330">
    <property type="protein sequence ID" value="AAD14013.1"/>
    <property type="molecule type" value="mRNA"/>
</dbReference>
<dbReference type="EMBL" id="U05598">
    <property type="protein sequence ID" value="AAA20937.1"/>
    <property type="molecule type" value="mRNA"/>
</dbReference>
<dbReference type="EMBL" id="L32592">
    <property type="protein sequence ID" value="AAB38486.1"/>
    <property type="molecule type" value="Genomic_DNA"/>
</dbReference>
<dbReference type="EMBL" id="AB021654">
    <property type="protein sequence ID" value="BAA36169.1"/>
    <property type="molecule type" value="mRNA"/>
</dbReference>
<dbReference type="EMBL" id="AB031084">
    <property type="protein sequence ID" value="BAA92884.1"/>
    <property type="molecule type" value="mRNA"/>
</dbReference>
<dbReference type="EMBL" id="AB032153">
    <property type="protein sequence ID" value="BAA92891.1"/>
    <property type="molecule type" value="Genomic_DNA"/>
</dbReference>
<dbReference type="EMBL" id="AK290304">
    <property type="protein sequence ID" value="BAF82993.1"/>
    <property type="molecule type" value="mRNA"/>
</dbReference>
<dbReference type="EMBL" id="AK296686">
    <property type="protein sequence ID" value="BAG59281.1"/>
    <property type="molecule type" value="mRNA"/>
</dbReference>
<dbReference type="EMBL" id="BT006653">
    <property type="protein sequence ID" value="AAP35299.1"/>
    <property type="molecule type" value="mRNA"/>
</dbReference>
<dbReference type="EMBL" id="AL391427">
    <property type="status" value="NOT_ANNOTATED_CDS"/>
    <property type="molecule type" value="Genomic_DNA"/>
</dbReference>
<dbReference type="EMBL" id="AL713867">
    <property type="status" value="NOT_ANNOTATED_CDS"/>
    <property type="molecule type" value="Genomic_DNA"/>
</dbReference>
<dbReference type="EMBL" id="BC007024">
    <property type="protein sequence ID" value="AAH07024.1"/>
    <property type="molecule type" value="mRNA"/>
</dbReference>
<dbReference type="EMBL" id="BC063574">
    <property type="protein sequence ID" value="AAH63574.1"/>
    <property type="molecule type" value="mRNA"/>
</dbReference>
<dbReference type="CCDS" id="CCDS44350.1">
    <molecule id="P52895-2"/>
</dbReference>
<dbReference type="CCDS" id="CCDS7062.1">
    <molecule id="P52895-1"/>
</dbReference>
<dbReference type="PIR" id="I73676">
    <property type="entry name" value="I73676"/>
</dbReference>
<dbReference type="PIR" id="JC5240">
    <property type="entry name" value="JC5240"/>
</dbReference>
<dbReference type="PIR" id="S61516">
    <property type="entry name" value="S61516"/>
</dbReference>
<dbReference type="RefSeq" id="NP_001128713.1">
    <molecule id="P52895-2"/>
    <property type="nucleotide sequence ID" value="NM_001135241.3"/>
</dbReference>
<dbReference type="RefSeq" id="NP_001345.1">
    <molecule id="P52895-1"/>
    <property type="nucleotide sequence ID" value="NM_001354.6"/>
</dbReference>
<dbReference type="RefSeq" id="NP_001380321.1">
    <molecule id="P52895-1"/>
    <property type="nucleotide sequence ID" value="NM_001393392.1"/>
</dbReference>
<dbReference type="RefSeq" id="NP_995317.1">
    <molecule id="P52895-1"/>
    <property type="nucleotide sequence ID" value="NM_205845.3"/>
</dbReference>
<dbReference type="RefSeq" id="XP_047280638.1">
    <molecule id="P52895-1"/>
    <property type="nucleotide sequence ID" value="XM_047424682.1"/>
</dbReference>
<dbReference type="RefSeq" id="XP_047280639.1">
    <molecule id="P52895-1"/>
    <property type="nucleotide sequence ID" value="XM_047424683.1"/>
</dbReference>
<dbReference type="RefSeq" id="XP_054220900.1">
    <molecule id="P52895-1"/>
    <property type="nucleotide sequence ID" value="XM_054364925.1"/>
</dbReference>
<dbReference type="RefSeq" id="XP_054220901.1">
    <molecule id="P52895-1"/>
    <property type="nucleotide sequence ID" value="XM_054364926.1"/>
</dbReference>
<dbReference type="PDB" id="1IHI">
    <property type="method" value="X-ray"/>
    <property type="resolution" value="3.00 A"/>
    <property type="chains" value="A/B=1-323"/>
</dbReference>
<dbReference type="PDB" id="1J96">
    <property type="method" value="X-ray"/>
    <property type="resolution" value="1.25 A"/>
    <property type="chains" value="A/B=2-323"/>
</dbReference>
<dbReference type="PDB" id="1XJB">
    <property type="method" value="X-ray"/>
    <property type="resolution" value="1.90 A"/>
    <property type="chains" value="A/B=2-323"/>
</dbReference>
<dbReference type="PDB" id="2HDJ">
    <property type="method" value="X-ray"/>
    <property type="resolution" value="2.00 A"/>
    <property type="chains" value="A/B=1-323"/>
</dbReference>
<dbReference type="PDB" id="2IPJ">
    <property type="method" value="X-ray"/>
    <property type="resolution" value="1.80 A"/>
    <property type="chains" value="A/B=3-323"/>
</dbReference>
<dbReference type="PDB" id="4JQ1">
    <property type="method" value="X-ray"/>
    <property type="resolution" value="1.60 A"/>
    <property type="chains" value="A/B=1-323"/>
</dbReference>
<dbReference type="PDB" id="4JQ2">
    <property type="method" value="X-ray"/>
    <property type="resolution" value="1.75 A"/>
    <property type="chains" value="A/B=1-323"/>
</dbReference>
<dbReference type="PDB" id="4JQ3">
    <property type="method" value="X-ray"/>
    <property type="resolution" value="1.75 A"/>
    <property type="chains" value="A/B=1-323"/>
</dbReference>
<dbReference type="PDB" id="4JQ4">
    <property type="method" value="X-ray"/>
    <property type="resolution" value="1.52 A"/>
    <property type="chains" value="A/B=1-323"/>
</dbReference>
<dbReference type="PDB" id="4JQA">
    <property type="method" value="X-ray"/>
    <property type="resolution" value="1.45 A"/>
    <property type="chains" value="A/B=1-323"/>
</dbReference>
<dbReference type="PDB" id="4JTQ">
    <property type="method" value="X-ray"/>
    <property type="resolution" value="1.60 A"/>
    <property type="chains" value="A/B=1-323"/>
</dbReference>
<dbReference type="PDB" id="4JTR">
    <property type="method" value="X-ray"/>
    <property type="resolution" value="1.30 A"/>
    <property type="chains" value="A/B=1-323"/>
</dbReference>
<dbReference type="PDB" id="4L1W">
    <property type="method" value="X-ray"/>
    <property type="resolution" value="2.20 A"/>
    <property type="chains" value="A/B=2-323"/>
</dbReference>
<dbReference type="PDB" id="4L1X">
    <property type="method" value="X-ray"/>
    <property type="resolution" value="2.00 A"/>
    <property type="chains" value="A/B=2-323"/>
</dbReference>
<dbReference type="PDB" id="4XO6">
    <property type="method" value="X-ray"/>
    <property type="resolution" value="1.20 A"/>
    <property type="chains" value="A/B=2-323"/>
</dbReference>
<dbReference type="PDB" id="4XO7">
    <property type="method" value="X-ray"/>
    <property type="resolution" value="1.75 A"/>
    <property type="chains" value="A/B=1-323"/>
</dbReference>
<dbReference type="PDBsum" id="1IHI"/>
<dbReference type="PDBsum" id="1J96"/>
<dbReference type="PDBsum" id="1XJB"/>
<dbReference type="PDBsum" id="2HDJ"/>
<dbReference type="PDBsum" id="2IPJ"/>
<dbReference type="PDBsum" id="4JQ1"/>
<dbReference type="PDBsum" id="4JQ2"/>
<dbReference type="PDBsum" id="4JQ3"/>
<dbReference type="PDBsum" id="4JQ4"/>
<dbReference type="PDBsum" id="4JQA"/>
<dbReference type="PDBsum" id="4JTQ"/>
<dbReference type="PDBsum" id="4JTR"/>
<dbReference type="PDBsum" id="4L1W"/>
<dbReference type="PDBsum" id="4L1X"/>
<dbReference type="PDBsum" id="4XO6"/>
<dbReference type="PDBsum" id="4XO7"/>
<dbReference type="SMR" id="P52895"/>
<dbReference type="BioGRID" id="108013">
    <property type="interactions" value="60"/>
</dbReference>
<dbReference type="FunCoup" id="P52895">
    <property type="interactions" value="198"/>
</dbReference>
<dbReference type="IntAct" id="P52895">
    <property type="interactions" value="13"/>
</dbReference>
<dbReference type="STRING" id="9606.ENSP00000370129"/>
<dbReference type="BindingDB" id="P52895"/>
<dbReference type="ChEMBL" id="CHEMBL5847"/>
<dbReference type="DrugBank" id="DB06777">
    <property type="generic name" value="Chenodeoxycholic acid"/>
</dbReference>
<dbReference type="DrugBank" id="DB07768">
    <property type="generic name" value="Epitestosterone"/>
</dbReference>
<dbReference type="DrugBank" id="DB01039">
    <property type="generic name" value="Fenofibrate"/>
</dbReference>
<dbReference type="DrugBank" id="DB13751">
    <property type="generic name" value="Glycyrrhizic acid"/>
</dbReference>
<dbReference type="DrugBank" id="DB06077">
    <property type="generic name" value="Lumateperone"/>
</dbReference>
<dbReference type="DrugBank" id="DB00959">
    <property type="generic name" value="Methylprednisolone"/>
</dbReference>
<dbReference type="DrugBank" id="DB00461">
    <property type="generic name" value="Nabumetone"/>
</dbReference>
<dbReference type="DrugBank" id="DB00157">
    <property type="generic name" value="NADH"/>
</dbReference>
<dbReference type="DrugBank" id="DB03461">
    <property type="generic name" value="Nicotinamide adenine dinucleotide phosphate"/>
</dbReference>
<dbReference type="DrugBank" id="DB00776">
    <property type="generic name" value="Oxcarbazepine"/>
</dbReference>
<dbReference type="DrugBank" id="DB12612">
    <property type="generic name" value="Ozanimod"/>
</dbReference>
<dbReference type="DrugBank" id="DB01586">
    <property type="generic name" value="Ursodeoxycholic acid"/>
</dbReference>
<dbReference type="DrugCentral" id="P52895"/>
<dbReference type="SwissLipids" id="SLP:000000803"/>
<dbReference type="iPTMnet" id="P52895"/>
<dbReference type="PhosphoSitePlus" id="P52895"/>
<dbReference type="SwissPalm" id="P52895"/>
<dbReference type="BioMuta" id="AKR1C2"/>
<dbReference type="DMDM" id="20532374"/>
<dbReference type="jPOST" id="P52895"/>
<dbReference type="MassIVE" id="P52895"/>
<dbReference type="PaxDb" id="9606-ENSP00000370129"/>
<dbReference type="PeptideAtlas" id="P52895"/>
<dbReference type="ProteomicsDB" id="56548">
    <molecule id="P52895-1"/>
</dbReference>
<dbReference type="ProteomicsDB" id="56549">
    <molecule id="P52895-2"/>
</dbReference>
<dbReference type="Pumba" id="P52895"/>
<dbReference type="Antibodypedia" id="23996">
    <property type="antibodies" value="296 antibodies from 32 providers"/>
</dbReference>
<dbReference type="CPTC" id="P52895">
    <property type="antibodies" value="3 antibodies"/>
</dbReference>
<dbReference type="DNASU" id="1646"/>
<dbReference type="Ensembl" id="ENST00000380753.9">
    <molecule id="P52895-1"/>
    <property type="protein sequence ID" value="ENSP00000370129.4"/>
    <property type="gene ID" value="ENSG00000151632.18"/>
</dbReference>
<dbReference type="Ensembl" id="ENST00000455190.2">
    <molecule id="P52895-2"/>
    <property type="protein sequence ID" value="ENSP00000408440.1"/>
    <property type="gene ID" value="ENSG00000151632.18"/>
</dbReference>
<dbReference type="GeneID" id="1646"/>
<dbReference type="KEGG" id="hsa:1646"/>
<dbReference type="MANE-Select" id="ENST00000380753.9">
    <property type="protein sequence ID" value="ENSP00000370129.4"/>
    <property type="RefSeq nucleotide sequence ID" value="NM_001393392.1"/>
    <property type="RefSeq protein sequence ID" value="NP_001380321.1"/>
</dbReference>
<dbReference type="UCSC" id="uc010qao.2">
    <molecule id="P52895-1"/>
    <property type="organism name" value="human"/>
</dbReference>
<dbReference type="AGR" id="HGNC:385"/>
<dbReference type="CTD" id="1646"/>
<dbReference type="DisGeNET" id="1646"/>
<dbReference type="GeneCards" id="AKR1C2"/>
<dbReference type="HGNC" id="HGNC:385">
    <property type="gene designation" value="AKR1C2"/>
</dbReference>
<dbReference type="HPA" id="ENSG00000151632">
    <property type="expression patterns" value="Tissue enhanced (adipose tissue, liver)"/>
</dbReference>
<dbReference type="MalaCards" id="AKR1C2"/>
<dbReference type="MIM" id="600450">
    <property type="type" value="gene"/>
</dbReference>
<dbReference type="MIM" id="614279">
    <property type="type" value="phenotype"/>
</dbReference>
<dbReference type="neXtProt" id="NX_P52895"/>
<dbReference type="OpenTargets" id="ENSG00000151632"/>
<dbReference type="Orphanet" id="443087">
    <property type="disease" value="46,XY difference of sex development due to testicular 17,20-desmolase deficiency"/>
</dbReference>
<dbReference type="PharmGKB" id="PA24678"/>
<dbReference type="VEuPathDB" id="HostDB:ENSG00000151632"/>
<dbReference type="eggNOG" id="KOG1577">
    <property type="taxonomic scope" value="Eukaryota"/>
</dbReference>
<dbReference type="GeneTree" id="ENSGT00940000167640"/>
<dbReference type="HOGENOM" id="CLU_023205_19_2_1"/>
<dbReference type="InParanoid" id="P52895"/>
<dbReference type="OMA" id="KLWSAYH"/>
<dbReference type="OrthoDB" id="9508965at2759"/>
<dbReference type="PAN-GO" id="P52895">
    <property type="GO annotations" value="9 GO annotations based on evolutionary models"/>
</dbReference>
<dbReference type="PhylomeDB" id="P52895"/>
<dbReference type="TreeFam" id="TF106492"/>
<dbReference type="BioCyc" id="MetaCyc:HS07754-MONOMER"/>
<dbReference type="BRENDA" id="1.1.1.213">
    <property type="organism ID" value="2681"/>
</dbReference>
<dbReference type="BRENDA" id="1.1.1.357">
    <property type="organism ID" value="2681"/>
</dbReference>
<dbReference type="BRENDA" id="1.1.1.50">
    <property type="organism ID" value="2681"/>
</dbReference>
<dbReference type="BRENDA" id="1.3.1.20">
    <property type="organism ID" value="2681"/>
</dbReference>
<dbReference type="PathwayCommons" id="P52895"/>
<dbReference type="Reactome" id="R-HSA-193368">
    <property type="pathway name" value="Synthesis of bile acids and bile salts via 7alpha-hydroxycholesterol"/>
</dbReference>
<dbReference type="Reactome" id="R-HSA-193775">
    <property type="pathway name" value="Synthesis of bile acids and bile salts via 24-hydroxycholesterol"/>
</dbReference>
<dbReference type="Reactome" id="R-HSA-193807">
    <property type="pathway name" value="Synthesis of bile acids and bile salts via 27-hydroxycholesterol"/>
</dbReference>
<dbReference type="SABIO-RK" id="P52895"/>
<dbReference type="SignaLink" id="P52895"/>
<dbReference type="SIGNOR" id="P52895"/>
<dbReference type="BioGRID-ORCS" id="1646">
    <property type="hits" value="19 hits in 1091 CRISPR screens"/>
</dbReference>
<dbReference type="CD-CODE" id="91857CE7">
    <property type="entry name" value="Nucleolus"/>
</dbReference>
<dbReference type="CD-CODE" id="FB4E32DD">
    <property type="entry name" value="Presynaptic clusters and postsynaptic densities"/>
</dbReference>
<dbReference type="ChiTaRS" id="AKR1C2">
    <property type="organism name" value="human"/>
</dbReference>
<dbReference type="EvolutionaryTrace" id="P52895"/>
<dbReference type="GenomeRNAi" id="1646"/>
<dbReference type="Pharos" id="P52895">
    <property type="development level" value="Tchem"/>
</dbReference>
<dbReference type="PRO" id="PR:P52895"/>
<dbReference type="Proteomes" id="UP000005640">
    <property type="component" value="Chromosome 10"/>
</dbReference>
<dbReference type="RNAct" id="P52895">
    <property type="molecule type" value="protein"/>
</dbReference>
<dbReference type="Bgee" id="ENSG00000151632">
    <property type="expression patterns" value="Expressed in islet of Langerhans and 94 other cell types or tissues"/>
</dbReference>
<dbReference type="ExpressionAtlas" id="P52895">
    <property type="expression patterns" value="baseline and differential"/>
</dbReference>
<dbReference type="GO" id="GO:0005829">
    <property type="term" value="C:cytosol"/>
    <property type="evidence" value="ECO:0000318"/>
    <property type="project" value="GO_Central"/>
</dbReference>
<dbReference type="GO" id="GO:0004032">
    <property type="term" value="F:aldose reductase (NADPH) activity"/>
    <property type="evidence" value="ECO:0000314"/>
    <property type="project" value="UniProtKB"/>
</dbReference>
<dbReference type="GO" id="GO:0047044">
    <property type="term" value="F:androstan-3-alpha,17-beta-diol dehydrogenase (NAD+) activity"/>
    <property type="evidence" value="ECO:0007669"/>
    <property type="project" value="UniProtKB-EC"/>
</dbReference>
<dbReference type="GO" id="GO:0047023">
    <property type="term" value="F:androsterone dehydrogenase [NAD(P)+] activity"/>
    <property type="evidence" value="ECO:0000318"/>
    <property type="project" value="GO_Central"/>
</dbReference>
<dbReference type="GO" id="GO:0032052">
    <property type="term" value="F:bile acid binding"/>
    <property type="evidence" value="ECO:0000314"/>
    <property type="project" value="UniProtKB"/>
</dbReference>
<dbReference type="GO" id="GO:0031406">
    <property type="term" value="F:carboxylic acid binding"/>
    <property type="evidence" value="ECO:0000314"/>
    <property type="project" value="UniProtKB"/>
</dbReference>
<dbReference type="GO" id="GO:0004303">
    <property type="term" value="F:estradiol 17-beta-dehydrogenase [NAD(P)+] activity"/>
    <property type="evidence" value="ECO:0007669"/>
    <property type="project" value="UniProtKB-EC"/>
</dbReference>
<dbReference type="GO" id="GO:0047718">
    <property type="term" value="F:indanol dehydrogenase activity"/>
    <property type="evidence" value="ECO:0007669"/>
    <property type="project" value="UniProtKB-EC"/>
</dbReference>
<dbReference type="GO" id="GO:0047086">
    <property type="term" value="F:ketosteroid monooxygenase activity"/>
    <property type="evidence" value="ECO:0000314"/>
    <property type="project" value="UniProtKB"/>
</dbReference>
<dbReference type="GO" id="GO:0016655">
    <property type="term" value="F:oxidoreductase activity, acting on NAD(P)H, quinone or similar compound as acceptor"/>
    <property type="evidence" value="ECO:0000314"/>
    <property type="project" value="UniProtKB"/>
</dbReference>
<dbReference type="GO" id="GO:0047115">
    <property type="term" value="F:trans-1,2-dihydrobenzene-1,2-diol dehydrogenase activity"/>
    <property type="evidence" value="ECO:0000314"/>
    <property type="project" value="UniProtKB"/>
</dbReference>
<dbReference type="GO" id="GO:0071395">
    <property type="term" value="P:cellular response to jasmonic acid stimulus"/>
    <property type="evidence" value="ECO:0000314"/>
    <property type="project" value="UniProtKB"/>
</dbReference>
<dbReference type="GO" id="GO:0071799">
    <property type="term" value="P:cellular response to prostaglandin D stimulus"/>
    <property type="evidence" value="ECO:0000314"/>
    <property type="project" value="UniProtKB"/>
</dbReference>
<dbReference type="GO" id="GO:0044597">
    <property type="term" value="P:daunorubicin metabolic process"/>
    <property type="evidence" value="ECO:0000315"/>
    <property type="project" value="UniProtKB"/>
</dbReference>
<dbReference type="GO" id="GO:0007586">
    <property type="term" value="P:digestion"/>
    <property type="evidence" value="ECO:0000314"/>
    <property type="project" value="UniProtKB"/>
</dbReference>
<dbReference type="GO" id="GO:0044598">
    <property type="term" value="P:doxorubicin metabolic process"/>
    <property type="evidence" value="ECO:0000315"/>
    <property type="project" value="UniProtKB"/>
</dbReference>
<dbReference type="GO" id="GO:0030855">
    <property type="term" value="P:epithelial cell differentiation"/>
    <property type="evidence" value="ECO:0000270"/>
    <property type="project" value="UniProtKB"/>
</dbReference>
<dbReference type="GO" id="GO:0007186">
    <property type="term" value="P:G protein-coupled receptor signaling pathway"/>
    <property type="evidence" value="ECO:0000314"/>
    <property type="project" value="UniProtKB"/>
</dbReference>
<dbReference type="GO" id="GO:0008284">
    <property type="term" value="P:positive regulation of cell population proliferation"/>
    <property type="evidence" value="ECO:0000314"/>
    <property type="project" value="UniProtKB"/>
</dbReference>
<dbReference type="GO" id="GO:0051897">
    <property type="term" value="P:positive regulation of phosphatidylinositol 3-kinase/protein kinase B signal transduction"/>
    <property type="evidence" value="ECO:0000314"/>
    <property type="project" value="UniProtKB"/>
</dbReference>
<dbReference type="GO" id="GO:0042448">
    <property type="term" value="P:progesterone metabolic process"/>
    <property type="evidence" value="ECO:0000314"/>
    <property type="project" value="UniProtKB"/>
</dbReference>
<dbReference type="GO" id="GO:0006693">
    <property type="term" value="P:prostaglandin metabolic process"/>
    <property type="evidence" value="ECO:0000314"/>
    <property type="project" value="UniProtKB"/>
</dbReference>
<dbReference type="GO" id="GO:0008202">
    <property type="term" value="P:steroid metabolic process"/>
    <property type="evidence" value="ECO:0000314"/>
    <property type="project" value="UniProtKB"/>
</dbReference>
<dbReference type="CDD" id="cd19108">
    <property type="entry name" value="AKR_AKR1C1-35"/>
    <property type="match status" value="1"/>
</dbReference>
<dbReference type="FunFam" id="3.20.20.100:FF:000003">
    <property type="entry name" value="Aldo-keto reductase family 1 member C3"/>
    <property type="match status" value="1"/>
</dbReference>
<dbReference type="Gene3D" id="3.20.20.100">
    <property type="entry name" value="NADP-dependent oxidoreductase domain"/>
    <property type="match status" value="1"/>
</dbReference>
<dbReference type="InterPro" id="IPR020471">
    <property type="entry name" value="AKR"/>
</dbReference>
<dbReference type="InterPro" id="IPR044482">
    <property type="entry name" value="AKR1C"/>
</dbReference>
<dbReference type="InterPro" id="IPR018170">
    <property type="entry name" value="Aldo/ket_reductase_CS"/>
</dbReference>
<dbReference type="InterPro" id="IPR023210">
    <property type="entry name" value="NADP_OxRdtase_dom"/>
</dbReference>
<dbReference type="InterPro" id="IPR036812">
    <property type="entry name" value="NADP_OxRdtase_dom_sf"/>
</dbReference>
<dbReference type="PANTHER" id="PTHR11732">
    <property type="entry name" value="ALDO/KETO REDUCTASE"/>
    <property type="match status" value="1"/>
</dbReference>
<dbReference type="Pfam" id="PF00248">
    <property type="entry name" value="Aldo_ket_red"/>
    <property type="match status" value="1"/>
</dbReference>
<dbReference type="PIRSF" id="PIRSF000097">
    <property type="entry name" value="AKR"/>
    <property type="match status" value="1"/>
</dbReference>
<dbReference type="PRINTS" id="PR00069">
    <property type="entry name" value="ALDKETRDTASE"/>
</dbReference>
<dbReference type="SUPFAM" id="SSF51430">
    <property type="entry name" value="NAD(P)-linked oxidoreductase"/>
    <property type="match status" value="1"/>
</dbReference>
<dbReference type="PROSITE" id="PS00062">
    <property type="entry name" value="ALDOKETO_REDUCTASE_2"/>
    <property type="match status" value="1"/>
</dbReference>
<dbReference type="PROSITE" id="PS00063">
    <property type="entry name" value="ALDOKETO_REDUCTASE_3"/>
    <property type="match status" value="1"/>
</dbReference>